<sequence length="163" mass="18655">MVKKKSSKAAPATIARNKRATFEYRFEEKMEAGLSLMGWEVKSIRMGKVNLSDCYVFLKNGEAFMHGCTIIPLNTASTHVVCDPLRLKKLLLSRKELDKLAGLVERQGYSIIPISMYWRKGAWVKVEIGLGKGKKDHDKREDTKAREWEVEKARVMKKEKTHG</sequence>
<name>SSRP_SHESW</name>
<dbReference type="EMBL" id="CP000503">
    <property type="protein sequence ID" value="ABM25693.1"/>
    <property type="molecule type" value="Genomic_DNA"/>
</dbReference>
<dbReference type="RefSeq" id="WP_011790147.1">
    <property type="nucleotide sequence ID" value="NC_008750.1"/>
</dbReference>
<dbReference type="SMR" id="A1RLZ8"/>
<dbReference type="GeneID" id="67442752"/>
<dbReference type="KEGG" id="shw:Sputw3181_2876"/>
<dbReference type="HOGENOM" id="CLU_108953_3_0_6"/>
<dbReference type="Proteomes" id="UP000002597">
    <property type="component" value="Chromosome"/>
</dbReference>
<dbReference type="GO" id="GO:0005829">
    <property type="term" value="C:cytosol"/>
    <property type="evidence" value="ECO:0007669"/>
    <property type="project" value="TreeGrafter"/>
</dbReference>
<dbReference type="GO" id="GO:0003723">
    <property type="term" value="F:RNA binding"/>
    <property type="evidence" value="ECO:0007669"/>
    <property type="project" value="UniProtKB-UniRule"/>
</dbReference>
<dbReference type="GO" id="GO:0070929">
    <property type="term" value="P:trans-translation"/>
    <property type="evidence" value="ECO:0007669"/>
    <property type="project" value="UniProtKB-UniRule"/>
</dbReference>
<dbReference type="CDD" id="cd09294">
    <property type="entry name" value="SmpB"/>
    <property type="match status" value="1"/>
</dbReference>
<dbReference type="Gene3D" id="2.40.280.10">
    <property type="match status" value="1"/>
</dbReference>
<dbReference type="HAMAP" id="MF_00023">
    <property type="entry name" value="SmpB"/>
    <property type="match status" value="1"/>
</dbReference>
<dbReference type="InterPro" id="IPR023620">
    <property type="entry name" value="SmpB"/>
</dbReference>
<dbReference type="InterPro" id="IPR000037">
    <property type="entry name" value="SsrA-bd_prot"/>
</dbReference>
<dbReference type="InterPro" id="IPR020081">
    <property type="entry name" value="SsrA-bd_prot_CS"/>
</dbReference>
<dbReference type="NCBIfam" id="NF003843">
    <property type="entry name" value="PRK05422.1"/>
    <property type="match status" value="1"/>
</dbReference>
<dbReference type="NCBIfam" id="TIGR00086">
    <property type="entry name" value="smpB"/>
    <property type="match status" value="1"/>
</dbReference>
<dbReference type="PANTHER" id="PTHR30308:SF2">
    <property type="entry name" value="SSRA-BINDING PROTEIN"/>
    <property type="match status" value="1"/>
</dbReference>
<dbReference type="PANTHER" id="PTHR30308">
    <property type="entry name" value="TMRNA-BINDING COMPONENT OF TRANS-TRANSLATION TAGGING COMPLEX"/>
    <property type="match status" value="1"/>
</dbReference>
<dbReference type="Pfam" id="PF01668">
    <property type="entry name" value="SmpB"/>
    <property type="match status" value="1"/>
</dbReference>
<dbReference type="SUPFAM" id="SSF74982">
    <property type="entry name" value="Small protein B (SmpB)"/>
    <property type="match status" value="1"/>
</dbReference>
<dbReference type="PROSITE" id="PS01317">
    <property type="entry name" value="SSRP"/>
    <property type="match status" value="1"/>
</dbReference>
<comment type="function">
    <text evidence="1">Required for rescue of stalled ribosomes mediated by trans-translation. Binds to transfer-messenger RNA (tmRNA), required for stable association of tmRNA with ribosomes. tmRNA and SmpB together mimic tRNA shape, replacing the anticodon stem-loop with SmpB. tmRNA is encoded by the ssrA gene; the 2 termini fold to resemble tRNA(Ala) and it encodes a 'tag peptide', a short internal open reading frame. During trans-translation Ala-aminoacylated tmRNA acts like a tRNA, entering the A-site of stalled ribosomes, displacing the stalled mRNA. The ribosome then switches to translate the ORF on the tmRNA; the nascent peptide is terminated with the 'tag peptide' encoded by the tmRNA and targeted for degradation. The ribosome is freed to recommence translation, which seems to be the essential function of trans-translation.</text>
</comment>
<comment type="subcellular location">
    <subcellularLocation>
        <location evidence="1">Cytoplasm</location>
    </subcellularLocation>
    <text evidence="1">The tmRNA-SmpB complex associates with stalled 70S ribosomes.</text>
</comment>
<comment type="similarity">
    <text evidence="1">Belongs to the SmpB family.</text>
</comment>
<protein>
    <recommendedName>
        <fullName evidence="1">SsrA-binding protein</fullName>
    </recommendedName>
    <alternativeName>
        <fullName evidence="1">Small protein B</fullName>
    </alternativeName>
</protein>
<feature type="chain" id="PRO_1000002145" description="SsrA-binding protein">
    <location>
        <begin position="1"/>
        <end position="163"/>
    </location>
</feature>
<keyword id="KW-0963">Cytoplasm</keyword>
<keyword id="KW-0694">RNA-binding</keyword>
<organism>
    <name type="scientific">Shewanella sp. (strain W3-18-1)</name>
    <dbReference type="NCBI Taxonomy" id="351745"/>
    <lineage>
        <taxon>Bacteria</taxon>
        <taxon>Pseudomonadati</taxon>
        <taxon>Pseudomonadota</taxon>
        <taxon>Gammaproteobacteria</taxon>
        <taxon>Alteromonadales</taxon>
        <taxon>Shewanellaceae</taxon>
        <taxon>Shewanella</taxon>
    </lineage>
</organism>
<proteinExistence type="inferred from homology"/>
<accession>A1RLZ8</accession>
<gene>
    <name evidence="1" type="primary">smpB</name>
    <name type="ordered locus">Sputw3181_2876</name>
</gene>
<evidence type="ECO:0000255" key="1">
    <source>
        <dbReference type="HAMAP-Rule" id="MF_00023"/>
    </source>
</evidence>
<reference key="1">
    <citation type="submission" date="2006-12" db="EMBL/GenBank/DDBJ databases">
        <title>Complete sequence of Shewanella sp. W3-18-1.</title>
        <authorList>
            <consortium name="US DOE Joint Genome Institute"/>
            <person name="Copeland A."/>
            <person name="Lucas S."/>
            <person name="Lapidus A."/>
            <person name="Barry K."/>
            <person name="Detter J.C."/>
            <person name="Glavina del Rio T."/>
            <person name="Hammon N."/>
            <person name="Israni S."/>
            <person name="Dalin E."/>
            <person name="Tice H."/>
            <person name="Pitluck S."/>
            <person name="Chain P."/>
            <person name="Malfatti S."/>
            <person name="Shin M."/>
            <person name="Vergez L."/>
            <person name="Schmutz J."/>
            <person name="Larimer F."/>
            <person name="Land M."/>
            <person name="Hauser L."/>
            <person name="Kyrpides N."/>
            <person name="Lykidis A."/>
            <person name="Tiedje J."/>
            <person name="Richardson P."/>
        </authorList>
    </citation>
    <scope>NUCLEOTIDE SEQUENCE [LARGE SCALE GENOMIC DNA]</scope>
    <source>
        <strain>W3-18-1</strain>
    </source>
</reference>